<proteinExistence type="inferred from homology"/>
<keyword id="KW-0997">Cell inner membrane</keyword>
<keyword id="KW-1003">Cell membrane</keyword>
<keyword id="KW-0406">Ion transport</keyword>
<keyword id="KW-0408">Iron</keyword>
<keyword id="KW-0472">Membrane</keyword>
<keyword id="KW-0479">Metal-binding</keyword>
<keyword id="KW-1185">Reference proteome</keyword>
<keyword id="KW-0812">Transmembrane</keyword>
<keyword id="KW-1133">Transmembrane helix</keyword>
<keyword id="KW-0813">Transport</keyword>
<keyword id="KW-0862">Zinc</keyword>
<keyword id="KW-0864">Zinc transport</keyword>
<gene>
    <name evidence="1" type="primary">zupT</name>
    <name type="ordered locus">Plut_0908</name>
</gene>
<sequence>MSNFQAALLLTLLAGLSTGIGSAMALAVRHTNKRFLALSLGFSAGIMLYVSFMEIIPQSQEALSAGLSAKAGAWVSTISFFGGMLFTWAIDQMVPSFENPHEMSMIGPMTDAEKSDTRLHRMGIFTAAAIAIHNFPEGMAVFFSALSNQELGIVIASTIALHNIPEGMAVAVPIYFATKSRKRAFSLSFLSGLAEPLGALVGYTLLRPFLTPFVLGIVLASVSGIMVYISLDELLPSAEEYGEHHLAITGLIAGMAVMALSLLLLT</sequence>
<feature type="chain" id="PRO_1000128958" description="Zinc transporter ZupT">
    <location>
        <begin position="1"/>
        <end position="266"/>
    </location>
</feature>
<feature type="transmembrane region" description="Helical" evidence="1">
    <location>
        <begin position="8"/>
        <end position="28"/>
    </location>
</feature>
<feature type="transmembrane region" description="Helical" evidence="1">
    <location>
        <begin position="36"/>
        <end position="56"/>
    </location>
</feature>
<feature type="transmembrane region" description="Helical" evidence="1">
    <location>
        <begin position="71"/>
        <end position="91"/>
    </location>
</feature>
<feature type="transmembrane region" description="Helical" evidence="1">
    <location>
        <begin position="123"/>
        <end position="143"/>
    </location>
</feature>
<feature type="transmembrane region" description="Helical" evidence="1">
    <location>
        <begin position="152"/>
        <end position="172"/>
    </location>
</feature>
<feature type="transmembrane region" description="Helical" evidence="1">
    <location>
        <begin position="185"/>
        <end position="205"/>
    </location>
</feature>
<feature type="transmembrane region" description="Helical" evidence="1">
    <location>
        <begin position="209"/>
        <end position="229"/>
    </location>
</feature>
<feature type="transmembrane region" description="Helical" evidence="1">
    <location>
        <begin position="246"/>
        <end position="266"/>
    </location>
</feature>
<feature type="binding site" description="M2 metal binding site" evidence="1">
    <location>
        <position position="134"/>
    </location>
    <ligand>
        <name>Fe(2+)</name>
        <dbReference type="ChEBI" id="CHEBI:29033"/>
    </ligand>
</feature>
<feature type="binding site" description="M2 metal binding site" evidence="1">
    <location>
        <position position="137"/>
    </location>
    <ligand>
        <name>Fe(2+)</name>
        <dbReference type="ChEBI" id="CHEBI:29033"/>
    </ligand>
</feature>
<feature type="binding site" description="M1 metal binding site" evidence="1">
    <location>
        <position position="137"/>
    </location>
    <ligand>
        <name>Zn(2+)</name>
        <dbReference type="ChEBI" id="CHEBI:29105"/>
    </ligand>
</feature>
<feature type="binding site" description="M1 metal binding site" evidence="1">
    <location>
        <position position="162"/>
    </location>
    <ligand>
        <name>Zn(2+)</name>
        <dbReference type="ChEBI" id="CHEBI:29105"/>
    </ligand>
</feature>
<feature type="binding site" description="M2 metal binding site" evidence="1">
    <location>
        <position position="163"/>
    </location>
    <ligand>
        <name>Fe(2+)</name>
        <dbReference type="ChEBI" id="CHEBI:29033"/>
    </ligand>
</feature>
<feature type="binding site" description="M2 metal binding site" evidence="1">
    <location>
        <position position="166"/>
    </location>
    <ligand>
        <name>Fe(2+)</name>
        <dbReference type="ChEBI" id="CHEBI:29033"/>
    </ligand>
</feature>
<feature type="binding site" description="M1 metal binding site" evidence="1">
    <location>
        <position position="166"/>
    </location>
    <ligand>
        <name>Zn(2+)</name>
        <dbReference type="ChEBI" id="CHEBI:29105"/>
    </ligand>
</feature>
<feature type="binding site" description="M2 metal binding site" evidence="1">
    <location>
        <position position="195"/>
    </location>
    <ligand>
        <name>Fe(2+)</name>
        <dbReference type="ChEBI" id="CHEBI:29033"/>
    </ligand>
</feature>
<name>ZUPT_CHLL3</name>
<organism>
    <name type="scientific">Chlorobium luteolum (strain DSM 273 / BCRC 81028 / 2530)</name>
    <name type="common">Pelodictyon luteolum</name>
    <dbReference type="NCBI Taxonomy" id="319225"/>
    <lineage>
        <taxon>Bacteria</taxon>
        <taxon>Pseudomonadati</taxon>
        <taxon>Chlorobiota</taxon>
        <taxon>Chlorobiia</taxon>
        <taxon>Chlorobiales</taxon>
        <taxon>Chlorobiaceae</taxon>
        <taxon>Chlorobium/Pelodictyon group</taxon>
        <taxon>Pelodictyon</taxon>
    </lineage>
</organism>
<dbReference type="EMBL" id="CP000096">
    <property type="protein sequence ID" value="ABB23770.1"/>
    <property type="molecule type" value="Genomic_DNA"/>
</dbReference>
<dbReference type="RefSeq" id="WP_011357644.1">
    <property type="nucleotide sequence ID" value="NC_007512.1"/>
</dbReference>
<dbReference type="SMR" id="Q3B4G1"/>
<dbReference type="STRING" id="319225.Plut_0908"/>
<dbReference type="KEGG" id="plt:Plut_0908"/>
<dbReference type="eggNOG" id="COG0428">
    <property type="taxonomic scope" value="Bacteria"/>
</dbReference>
<dbReference type="HOGENOM" id="CLU_015114_1_3_10"/>
<dbReference type="OrthoDB" id="9787346at2"/>
<dbReference type="Proteomes" id="UP000002709">
    <property type="component" value="Chromosome"/>
</dbReference>
<dbReference type="GO" id="GO:0005886">
    <property type="term" value="C:plasma membrane"/>
    <property type="evidence" value="ECO:0007669"/>
    <property type="project" value="UniProtKB-SubCell"/>
</dbReference>
<dbReference type="GO" id="GO:0046872">
    <property type="term" value="F:metal ion binding"/>
    <property type="evidence" value="ECO:0007669"/>
    <property type="project" value="UniProtKB-KW"/>
</dbReference>
<dbReference type="GO" id="GO:0005385">
    <property type="term" value="F:zinc ion transmembrane transporter activity"/>
    <property type="evidence" value="ECO:0007669"/>
    <property type="project" value="UniProtKB-UniRule"/>
</dbReference>
<dbReference type="HAMAP" id="MF_00548">
    <property type="entry name" value="ZupT"/>
    <property type="match status" value="1"/>
</dbReference>
<dbReference type="InterPro" id="IPR003689">
    <property type="entry name" value="ZIP"/>
</dbReference>
<dbReference type="InterPro" id="IPR023498">
    <property type="entry name" value="Zn_transptr_ZupT"/>
</dbReference>
<dbReference type="NCBIfam" id="NF003243">
    <property type="entry name" value="PRK04201.1"/>
    <property type="match status" value="1"/>
</dbReference>
<dbReference type="PANTHER" id="PTHR11040:SF205">
    <property type="entry name" value="ZINC TRANSPORTER ZUPT"/>
    <property type="match status" value="1"/>
</dbReference>
<dbReference type="PANTHER" id="PTHR11040">
    <property type="entry name" value="ZINC/IRON TRANSPORTER"/>
    <property type="match status" value="1"/>
</dbReference>
<dbReference type="Pfam" id="PF02535">
    <property type="entry name" value="Zip"/>
    <property type="match status" value="2"/>
</dbReference>
<reference key="1">
    <citation type="submission" date="2005-08" db="EMBL/GenBank/DDBJ databases">
        <title>Complete sequence of Pelodictyon luteolum DSM 273.</title>
        <authorList>
            <consortium name="US DOE Joint Genome Institute"/>
            <person name="Copeland A."/>
            <person name="Lucas S."/>
            <person name="Lapidus A."/>
            <person name="Barry K."/>
            <person name="Detter J.C."/>
            <person name="Glavina T."/>
            <person name="Hammon N."/>
            <person name="Israni S."/>
            <person name="Pitluck S."/>
            <person name="Bryant D."/>
            <person name="Schmutz J."/>
            <person name="Larimer F."/>
            <person name="Land M."/>
            <person name="Kyrpides N."/>
            <person name="Ivanova N."/>
            <person name="Richardson P."/>
        </authorList>
    </citation>
    <scope>NUCLEOTIDE SEQUENCE [LARGE SCALE GENOMIC DNA]</scope>
    <source>
        <strain>DSM 273 / BCRC 81028 / 2530</strain>
    </source>
</reference>
<evidence type="ECO:0000255" key="1">
    <source>
        <dbReference type="HAMAP-Rule" id="MF_00548"/>
    </source>
</evidence>
<protein>
    <recommendedName>
        <fullName evidence="1">Zinc transporter ZupT</fullName>
    </recommendedName>
</protein>
<comment type="function">
    <text evidence="1">Mediates zinc uptake. May also transport other divalent cations.</text>
</comment>
<comment type="catalytic activity">
    <reaction evidence="1">
        <text>Zn(2+)(in) = Zn(2+)(out)</text>
        <dbReference type="Rhea" id="RHEA:29351"/>
        <dbReference type="ChEBI" id="CHEBI:29105"/>
    </reaction>
</comment>
<comment type="subcellular location">
    <subcellularLocation>
        <location evidence="1">Cell inner membrane</location>
        <topology evidence="1">Multi-pass membrane protein</topology>
    </subcellularLocation>
</comment>
<comment type="similarity">
    <text evidence="1">Belongs to the ZIP transporter (TC 2.A.5) family. ZupT subfamily.</text>
</comment>
<accession>Q3B4G1</accession>